<sequence length="165" mass="16645">MSSTFSGDETAPFFGFLGAAAALVFSCMGAAYGTAKSGVGVASMGVMRPELVMKSIVPVVMAGVLGIYGLIIAVIISTGINPKAKSYYLFDGYAHLSSGLACGLAGLSAGMAIGIVGDAGVRANAQQPKLFVGMILILIFAEALALYGLIVGIILSSRAGQSRAD</sequence>
<organism>
    <name type="scientific">Kalanchoe daigremontiana</name>
    <name type="common">Devil's backbone</name>
    <name type="synonym">Bryophyllum daigremontianum</name>
    <dbReference type="NCBI Taxonomy" id="23013"/>
    <lineage>
        <taxon>Eukaryota</taxon>
        <taxon>Viridiplantae</taxon>
        <taxon>Streptophyta</taxon>
        <taxon>Embryophyta</taxon>
        <taxon>Tracheophyta</taxon>
        <taxon>Spermatophyta</taxon>
        <taxon>Magnoliopsida</taxon>
        <taxon>eudicotyledons</taxon>
        <taxon>Gunneridae</taxon>
        <taxon>Pentapetalae</taxon>
        <taxon>Saxifragales</taxon>
        <taxon>Crassulaceae</taxon>
        <taxon>Kalanchoe</taxon>
    </lineage>
</organism>
<accession>Q96473</accession>
<protein>
    <recommendedName>
        <fullName>V-type proton ATPase 16 kDa proteolipid subunit</fullName>
        <shortName>V-ATPase 16 kDa proteolipid subunit</shortName>
    </recommendedName>
    <alternativeName>
        <fullName>V-type H(+)-ATPase 16 kDa subunit</fullName>
    </alternativeName>
    <alternativeName>
        <fullName>Vacuolar proton pump 16 kDa proteolipid subunit</fullName>
    </alternativeName>
</protein>
<reference key="1">
    <citation type="journal article" date="1996" name="Plant Mol. Biol.">
        <title>Isolation and sequence analysis of a cDNA encoding the c subunit of a vacuolar-type H(+)-ATPase from the CAM plant Kalanchoe daigremontiana.</title>
        <authorList>
            <person name="Bartholomew D.M."/>
            <person name="Rees D.J.G."/>
            <person name="Rambaut A."/>
            <person name="Smith J.A.C."/>
        </authorList>
    </citation>
    <scope>NUCLEOTIDE SEQUENCE [MRNA]</scope>
    <source>
        <tissue>Leaf</tissue>
    </source>
</reference>
<keyword id="KW-0375">Hydrogen ion transport</keyword>
<keyword id="KW-0406">Ion transport</keyword>
<keyword id="KW-0472">Membrane</keyword>
<keyword id="KW-0812">Transmembrane</keyword>
<keyword id="KW-1133">Transmembrane helix</keyword>
<keyword id="KW-0813">Transport</keyword>
<keyword id="KW-0926">Vacuole</keyword>
<proteinExistence type="evidence at transcript level"/>
<name>VATL_KALDA</name>
<feature type="chain" id="PRO_0000071769" description="V-type proton ATPase 16 kDa proteolipid subunit">
    <location>
        <begin position="1"/>
        <end position="165"/>
    </location>
</feature>
<feature type="topological domain" description="Lumenal" evidence="2">
    <location>
        <begin position="1"/>
        <end position="10"/>
    </location>
</feature>
<feature type="transmembrane region" description="Helical" evidence="2">
    <location>
        <begin position="11"/>
        <end position="33"/>
    </location>
</feature>
<feature type="topological domain" description="Cytoplasmic" evidence="2">
    <location>
        <begin position="34"/>
        <end position="55"/>
    </location>
</feature>
<feature type="transmembrane region" description="Helical" evidence="2">
    <location>
        <begin position="56"/>
        <end position="76"/>
    </location>
</feature>
<feature type="topological domain" description="Lumenal" evidence="2">
    <location>
        <begin position="77"/>
        <end position="95"/>
    </location>
</feature>
<feature type="transmembrane region" description="Helical" evidence="2">
    <location>
        <begin position="96"/>
        <end position="117"/>
    </location>
</feature>
<feature type="topological domain" description="Cytoplasmic" evidence="2">
    <location>
        <begin position="118"/>
        <end position="129"/>
    </location>
</feature>
<feature type="transmembrane region" description="Helical" evidence="2">
    <location>
        <begin position="130"/>
        <end position="155"/>
    </location>
</feature>
<feature type="topological domain" description="Lumenal" evidence="2">
    <location>
        <begin position="156"/>
        <end position="165"/>
    </location>
</feature>
<feature type="site" description="Essential for proton translocation" evidence="1">
    <location>
        <position position="142"/>
    </location>
</feature>
<comment type="function">
    <text>Proton-conducting pore forming subunit of the membrane integral V0 complex of vacuolar ATPase. V-ATPase is responsible for acidifying a variety of intracellular compartments in eukaryotic cells. Necessary for the crassulacean acid metabolism.</text>
</comment>
<comment type="subunit">
    <text>V-ATPase is a heteromultimeric enzyme composed of a peripheral catalytic V1 complex (main components: subunits A, B, C, D, E, and F) attached to an integral membrane V0 proton pore complex (main component: the proteolipid protein; which is present as a hexamer that forms the proton-conducting pore).</text>
</comment>
<comment type="subcellular location">
    <subcellularLocation>
        <location>Vacuole membrane</location>
        <topology>Multi-pass membrane protein</topology>
    </subcellularLocation>
    <text>Tonoplast.</text>
</comment>
<comment type="tissue specificity">
    <text>Higher expression in leaves, followed by roots and weakly in flowers. Expression in leaves is light-dependent.</text>
</comment>
<comment type="similarity">
    <text evidence="3">Belongs to the V-ATPase proteolipid subunit family.</text>
</comment>
<evidence type="ECO:0000250" key="1"/>
<evidence type="ECO:0000255" key="2"/>
<evidence type="ECO:0000305" key="3"/>
<dbReference type="EMBL" id="U16244">
    <property type="protein sequence ID" value="AAC49473.1"/>
    <property type="molecule type" value="mRNA"/>
</dbReference>
<dbReference type="SMR" id="Q96473"/>
<dbReference type="GO" id="GO:0033179">
    <property type="term" value="C:proton-transporting V-type ATPase, V0 domain"/>
    <property type="evidence" value="ECO:0007669"/>
    <property type="project" value="InterPro"/>
</dbReference>
<dbReference type="GO" id="GO:0005774">
    <property type="term" value="C:vacuolar membrane"/>
    <property type="evidence" value="ECO:0007669"/>
    <property type="project" value="UniProtKB-SubCell"/>
</dbReference>
<dbReference type="GO" id="GO:0046961">
    <property type="term" value="F:proton-transporting ATPase activity, rotational mechanism"/>
    <property type="evidence" value="ECO:0007669"/>
    <property type="project" value="InterPro"/>
</dbReference>
<dbReference type="CDD" id="cd18175">
    <property type="entry name" value="ATP-synt_Vo_c_ATP6C_rpt1"/>
    <property type="match status" value="1"/>
</dbReference>
<dbReference type="CDD" id="cd18176">
    <property type="entry name" value="ATP-synt_Vo_c_ATP6C_rpt2"/>
    <property type="match status" value="1"/>
</dbReference>
<dbReference type="FunFam" id="1.20.120.610:FF:000003">
    <property type="entry name" value="V-type proton ATPase proteolipid subunit"/>
    <property type="match status" value="1"/>
</dbReference>
<dbReference type="Gene3D" id="1.20.120.610">
    <property type="entry name" value="lithium bound rotor ring of v- atpase"/>
    <property type="match status" value="1"/>
</dbReference>
<dbReference type="InterPro" id="IPR002379">
    <property type="entry name" value="ATPase_proteolipid_c-like_dom"/>
</dbReference>
<dbReference type="InterPro" id="IPR000245">
    <property type="entry name" value="ATPase_proteolipid_csu"/>
</dbReference>
<dbReference type="InterPro" id="IPR011555">
    <property type="entry name" value="ATPase_proteolipid_su_C_euk"/>
</dbReference>
<dbReference type="InterPro" id="IPR035921">
    <property type="entry name" value="F/V-ATP_Csub_sf"/>
</dbReference>
<dbReference type="NCBIfam" id="TIGR01100">
    <property type="entry name" value="V_ATP_synt_C"/>
    <property type="match status" value="1"/>
</dbReference>
<dbReference type="PANTHER" id="PTHR10263">
    <property type="entry name" value="V-TYPE PROTON ATPASE PROTEOLIPID SUBUNIT"/>
    <property type="match status" value="1"/>
</dbReference>
<dbReference type="Pfam" id="PF00137">
    <property type="entry name" value="ATP-synt_C"/>
    <property type="match status" value="2"/>
</dbReference>
<dbReference type="PRINTS" id="PR00122">
    <property type="entry name" value="VACATPASE"/>
</dbReference>
<dbReference type="SUPFAM" id="SSF81333">
    <property type="entry name" value="F1F0 ATP synthase subunit C"/>
    <property type="match status" value="2"/>
</dbReference>